<reference evidence="7" key="1">
    <citation type="submission" date="2005-07" db="EMBL/GenBank/DDBJ databases">
        <authorList>
            <person name="Mural R.J."/>
            <person name="Adams M.D."/>
            <person name="Myers E.W."/>
            <person name="Smith H.O."/>
            <person name="Venter J.C."/>
        </authorList>
    </citation>
    <scope>NUCLEOTIDE SEQUENCE [LARGE SCALE GENOMIC DNA]</scope>
</reference>
<reference evidence="7" key="2">
    <citation type="journal article" date="2009" name="J. Biol. Chem.">
        <title>The clavesin family: neuron-specific lipid- and clathrin-binding Sec14 proteins regulating lysosomal morphology.</title>
        <authorList>
            <person name="Katoh Y."/>
            <person name="Ritter B."/>
            <person name="Gaffry T."/>
            <person name="Blondeau F."/>
            <person name="Honing S."/>
            <person name="McPherson P.S."/>
        </authorList>
    </citation>
    <scope>FUNCTION</scope>
    <scope>SUBCELLULAR LOCATION</scope>
    <scope>TISSUE SPECIFICITY</scope>
</reference>
<reference key="3">
    <citation type="journal article" date="2012" name="Nat. Commun.">
        <title>Quantitative maps of protein phosphorylation sites across 14 different rat organs and tissues.</title>
        <authorList>
            <person name="Lundby A."/>
            <person name="Secher A."/>
            <person name="Lage K."/>
            <person name="Nordsborg N.B."/>
            <person name="Dmytriyev A."/>
            <person name="Lundby C."/>
            <person name="Olsen J.V."/>
        </authorList>
    </citation>
    <scope>PHOSPHORYLATION [LARGE SCALE ANALYSIS] AT SER-325</scope>
    <scope>IDENTIFICATION BY MASS SPECTROMETRY [LARGE SCALE ANALYSIS]</scope>
</reference>
<accession>A6JUQ6</accession>
<feature type="chain" id="PRO_0000389620" description="Clavesin-2">
    <location>
        <begin position="1"/>
        <end position="327"/>
    </location>
</feature>
<feature type="domain" description="CRAL-TRIO" evidence="3">
    <location>
        <begin position="96"/>
        <end position="257"/>
    </location>
</feature>
<feature type="region of interest" description="Disordered" evidence="4">
    <location>
        <begin position="288"/>
        <end position="327"/>
    </location>
</feature>
<feature type="modified residue" description="Phosphoserine" evidence="9">
    <location>
        <position position="325"/>
    </location>
</feature>
<dbReference type="EMBL" id="CH474002">
    <property type="protein sequence ID" value="EDL87721.1"/>
    <property type="molecule type" value="Genomic_DNA"/>
</dbReference>
<dbReference type="RefSeq" id="NP_001397251.1">
    <property type="nucleotide sequence ID" value="NM_001410322.1"/>
</dbReference>
<dbReference type="RefSeq" id="XP_063122112.1">
    <property type="nucleotide sequence ID" value="XM_063266042.1"/>
</dbReference>
<dbReference type="RefSeq" id="XP_063122113.1">
    <property type="nucleotide sequence ID" value="XM_063266043.1"/>
</dbReference>
<dbReference type="SMR" id="A6JUQ6"/>
<dbReference type="FunCoup" id="A6JUQ6">
    <property type="interactions" value="323"/>
</dbReference>
<dbReference type="STRING" id="10116.ENSRNOP00000075964"/>
<dbReference type="iPTMnet" id="A6JUQ6"/>
<dbReference type="PhosphoSitePlus" id="A6JUQ6"/>
<dbReference type="PaxDb" id="10116-ENSRNOP00000016518"/>
<dbReference type="Ensembl" id="ENSRNOT00000092830.2">
    <property type="protein sequence ID" value="ENSRNOP00000075964.1"/>
    <property type="gene ID" value="ENSRNOG00000012122.7"/>
</dbReference>
<dbReference type="GeneID" id="361459"/>
<dbReference type="UCSC" id="RGD:1306801">
    <property type="organism name" value="rat"/>
</dbReference>
<dbReference type="AGR" id="RGD:1306801"/>
<dbReference type="RGD" id="1306801">
    <property type="gene designation" value="Clvs2"/>
</dbReference>
<dbReference type="eggNOG" id="KOG1471">
    <property type="taxonomic scope" value="Eukaryota"/>
</dbReference>
<dbReference type="GeneTree" id="ENSGT00940000157632"/>
<dbReference type="HOGENOM" id="CLU_046597_1_3_1"/>
<dbReference type="InParanoid" id="A6JUQ6"/>
<dbReference type="OMA" id="DEEPDYC"/>
<dbReference type="OrthoDB" id="7837562at2759"/>
<dbReference type="PhylomeDB" id="A6JUQ6"/>
<dbReference type="Reactome" id="R-RNO-432720">
    <property type="pathway name" value="Lysosome Vesicle Biogenesis"/>
</dbReference>
<dbReference type="PRO" id="PR:A6JUQ6"/>
<dbReference type="Proteomes" id="UP000002494">
    <property type="component" value="Chromosome 1"/>
</dbReference>
<dbReference type="Proteomes" id="UP000234681">
    <property type="component" value="Chromosome 1"/>
</dbReference>
<dbReference type="Bgee" id="ENSRNOG00000012122">
    <property type="expression patterns" value="Expressed in brain and 5 other cell types or tissues"/>
</dbReference>
<dbReference type="GO" id="GO:0030136">
    <property type="term" value="C:clathrin-coated vesicle"/>
    <property type="evidence" value="ECO:0000314"/>
    <property type="project" value="UniProtKB"/>
</dbReference>
<dbReference type="GO" id="GO:0031901">
    <property type="term" value="C:early endosome membrane"/>
    <property type="evidence" value="ECO:0007669"/>
    <property type="project" value="UniProtKB-SubCell"/>
</dbReference>
<dbReference type="GO" id="GO:0005768">
    <property type="term" value="C:endosome"/>
    <property type="evidence" value="ECO:0000250"/>
    <property type="project" value="UniProtKB"/>
</dbReference>
<dbReference type="GO" id="GO:0005802">
    <property type="term" value="C:trans-Golgi network"/>
    <property type="evidence" value="ECO:0000314"/>
    <property type="project" value="UniProtKB"/>
</dbReference>
<dbReference type="GO" id="GO:1902936">
    <property type="term" value="F:phosphatidylinositol bisphosphate binding"/>
    <property type="evidence" value="ECO:0000318"/>
    <property type="project" value="GO_Central"/>
</dbReference>
<dbReference type="GO" id="GO:0080025">
    <property type="term" value="F:phosphatidylinositol-3,5-bisphosphate binding"/>
    <property type="evidence" value="ECO:0000250"/>
    <property type="project" value="UniProtKB"/>
</dbReference>
<dbReference type="GO" id="GO:0007040">
    <property type="term" value="P:lysosome organization"/>
    <property type="evidence" value="ECO:0000315"/>
    <property type="project" value="UniProtKB"/>
</dbReference>
<dbReference type="CDD" id="cd00170">
    <property type="entry name" value="SEC14"/>
    <property type="match status" value="1"/>
</dbReference>
<dbReference type="FunFam" id="1.10.8.20:FF:000001">
    <property type="entry name" value="Alpha-tocopherol transfer protein-like"/>
    <property type="match status" value="1"/>
</dbReference>
<dbReference type="FunFam" id="3.40.525.10:FF:000002">
    <property type="entry name" value="Alpha-tocopherol transfer protein-like"/>
    <property type="match status" value="1"/>
</dbReference>
<dbReference type="FunFam" id="1.20.5.1200:FF:000001">
    <property type="entry name" value="Clavesin 2"/>
    <property type="match status" value="1"/>
</dbReference>
<dbReference type="Gene3D" id="1.20.5.1200">
    <property type="entry name" value="Alpha-tocopherol transfer"/>
    <property type="match status" value="1"/>
</dbReference>
<dbReference type="Gene3D" id="3.40.525.10">
    <property type="entry name" value="CRAL-TRIO lipid binding domain"/>
    <property type="match status" value="1"/>
</dbReference>
<dbReference type="Gene3D" id="1.10.8.20">
    <property type="entry name" value="N-terminal domain of phosphatidylinositol transfer protein sec14p"/>
    <property type="match status" value="1"/>
</dbReference>
<dbReference type="InterPro" id="IPR001251">
    <property type="entry name" value="CRAL-TRIO_dom"/>
</dbReference>
<dbReference type="InterPro" id="IPR036865">
    <property type="entry name" value="CRAL-TRIO_dom_sf"/>
</dbReference>
<dbReference type="InterPro" id="IPR011074">
    <property type="entry name" value="CRAL/TRIO_N_dom"/>
</dbReference>
<dbReference type="InterPro" id="IPR036273">
    <property type="entry name" value="CRAL/TRIO_N_dom_sf"/>
</dbReference>
<dbReference type="PANTHER" id="PTHR10174">
    <property type="entry name" value="ALPHA-TOCOPHEROL TRANSFER PROTEIN-RELATED"/>
    <property type="match status" value="1"/>
</dbReference>
<dbReference type="PANTHER" id="PTHR10174:SF73">
    <property type="entry name" value="CLAVESIN-2"/>
    <property type="match status" value="1"/>
</dbReference>
<dbReference type="Pfam" id="PF00650">
    <property type="entry name" value="CRAL_TRIO"/>
    <property type="match status" value="1"/>
</dbReference>
<dbReference type="Pfam" id="PF03765">
    <property type="entry name" value="CRAL_TRIO_N"/>
    <property type="match status" value="1"/>
</dbReference>
<dbReference type="PRINTS" id="PR00180">
    <property type="entry name" value="CRETINALDHBP"/>
</dbReference>
<dbReference type="SMART" id="SM01100">
    <property type="entry name" value="CRAL_TRIO_N"/>
    <property type="match status" value="1"/>
</dbReference>
<dbReference type="SMART" id="SM00516">
    <property type="entry name" value="SEC14"/>
    <property type="match status" value="1"/>
</dbReference>
<dbReference type="SUPFAM" id="SSF52087">
    <property type="entry name" value="CRAL/TRIO domain"/>
    <property type="match status" value="1"/>
</dbReference>
<dbReference type="SUPFAM" id="SSF46938">
    <property type="entry name" value="CRAL/TRIO N-terminal domain"/>
    <property type="match status" value="1"/>
</dbReference>
<dbReference type="PROSITE" id="PS50191">
    <property type="entry name" value="CRAL_TRIO"/>
    <property type="match status" value="1"/>
</dbReference>
<keyword id="KW-0968">Cytoplasmic vesicle</keyword>
<keyword id="KW-0967">Endosome</keyword>
<keyword id="KW-0333">Golgi apparatus</keyword>
<keyword id="KW-0446">Lipid-binding</keyword>
<keyword id="KW-0472">Membrane</keyword>
<keyword id="KW-0597">Phosphoprotein</keyword>
<keyword id="KW-1185">Reference proteome</keyword>
<evidence type="ECO:0000250" key="1">
    <source>
        <dbReference type="UniProtKB" id="Q5SYC1"/>
    </source>
</evidence>
<evidence type="ECO:0000250" key="2">
    <source>
        <dbReference type="UniProtKB" id="Q8IUQ0"/>
    </source>
</evidence>
<evidence type="ECO:0000255" key="3">
    <source>
        <dbReference type="PROSITE-ProRule" id="PRU00056"/>
    </source>
</evidence>
<evidence type="ECO:0000256" key="4">
    <source>
        <dbReference type="SAM" id="MobiDB-lite"/>
    </source>
</evidence>
<evidence type="ECO:0000269" key="5">
    <source>
    </source>
</evidence>
<evidence type="ECO:0000303" key="6">
    <source>
    </source>
</evidence>
<evidence type="ECO:0000305" key="7"/>
<evidence type="ECO:0000312" key="8">
    <source>
        <dbReference type="RGD" id="1306801"/>
    </source>
</evidence>
<evidence type="ECO:0007744" key="9">
    <source>
    </source>
</evidence>
<organism>
    <name type="scientific">Rattus norvegicus</name>
    <name type="common">Rat</name>
    <dbReference type="NCBI Taxonomy" id="10116"/>
    <lineage>
        <taxon>Eukaryota</taxon>
        <taxon>Metazoa</taxon>
        <taxon>Chordata</taxon>
        <taxon>Craniata</taxon>
        <taxon>Vertebrata</taxon>
        <taxon>Euteleostomi</taxon>
        <taxon>Mammalia</taxon>
        <taxon>Eutheria</taxon>
        <taxon>Euarchontoglires</taxon>
        <taxon>Glires</taxon>
        <taxon>Rodentia</taxon>
        <taxon>Myomorpha</taxon>
        <taxon>Muroidea</taxon>
        <taxon>Muridae</taxon>
        <taxon>Murinae</taxon>
        <taxon>Rattus</taxon>
    </lineage>
</organism>
<gene>
    <name evidence="6" type="primary">Clvs2</name>
    <name evidence="8" type="synonym">Rlbp1l2</name>
</gene>
<proteinExistence type="evidence at protein level"/>
<protein>
    <recommendedName>
        <fullName evidence="6">Clavesin-2</fullName>
    </recommendedName>
    <alternativeName>
        <fullName>Retinaldehyde-binding protein 1-like 2</fullName>
    </alternativeName>
</protein>
<name>CLVS2_RAT</name>
<sequence length="327" mass="37916">MTHLQAGLSPETLEKARLELNENPDTLHQDIQEVRDMVITRPDIGFLRTDDAFILRFLRARKFHHFEAFRLLAQYFEYRQQNLDMFKSFKATDPGIKQALKDGFPGGLANLDHYGRKILVLFAANWDQSRYTLVDILRAILLSLEAMIEDPELQVNGFVLIIDWSNFTFKQASKLTPSMLRLAIEGLQDSFPARFGGIHFVNQPWYIHALYTVIRPFLKEKTRKRIFLHGNNLNSLHQLIHPEILPSEFGGMLPPYDMGTWARTLLDHEYDDDSEYNVDSYSMPVNEVDKELSPKSMKRSQSVVDPTALKRMDKSEEENMQPLLSLD</sequence>
<comment type="function">
    <text evidence="1 5">Required for normal morphology of late endosomes and/or lysosomes in neurons. Binds phosphatidylinositol 3,5-bisphosphate (PtdIns(3,5)P2).</text>
</comment>
<comment type="subunit">
    <text evidence="1">Forms a complex with clathrin heavy chain and gamma-adaptin.</text>
</comment>
<comment type="subcellular location">
    <subcellularLocation>
        <location evidence="5">Golgi apparatus</location>
        <location evidence="5">trans-Golgi network membrane</location>
        <topology evidence="5">Peripheral membrane protein</topology>
    </subcellularLocation>
    <subcellularLocation>
        <location evidence="2">Early endosome membrane</location>
        <topology evidence="2">Peripheral membrane protein</topology>
    </subcellularLocation>
    <subcellularLocation>
        <location evidence="5">Cytoplasmic vesicle</location>
        <location evidence="5">Clathrin-coated vesicle</location>
    </subcellularLocation>
</comment>
<comment type="tissue specificity">
    <text evidence="5">Expressed in brain with no expression detected in non-neuronal tissues (at protein level).</text>
</comment>
<comment type="domain">
    <text evidence="1">The CRAL-TRIO domain is required for targeting to the membrane and for binding PtdIns(3,5)P2.</text>
</comment>
<comment type="miscellaneous">
    <text evidence="2">Binding to PtdIns(3,5)P2 is not required for localization.</text>
</comment>